<proteinExistence type="inferred from homology"/>
<accession>Q03IE9</accession>
<name>RUVB_STRTD</name>
<dbReference type="EC" id="3.6.4.-" evidence="1"/>
<dbReference type="EMBL" id="CP000419">
    <property type="protein sequence ID" value="ABJ67023.1"/>
    <property type="status" value="ALT_INIT"/>
    <property type="molecule type" value="Genomic_DNA"/>
</dbReference>
<dbReference type="RefSeq" id="WP_002948618.1">
    <property type="nucleotide sequence ID" value="NC_008532.1"/>
</dbReference>
<dbReference type="SMR" id="Q03IE9"/>
<dbReference type="GeneID" id="66899664"/>
<dbReference type="KEGG" id="ste:STER_1909"/>
<dbReference type="HOGENOM" id="CLU_055599_1_0_9"/>
<dbReference type="GO" id="GO:0005737">
    <property type="term" value="C:cytoplasm"/>
    <property type="evidence" value="ECO:0007669"/>
    <property type="project" value="UniProtKB-SubCell"/>
</dbReference>
<dbReference type="GO" id="GO:0048476">
    <property type="term" value="C:Holliday junction resolvase complex"/>
    <property type="evidence" value="ECO:0007669"/>
    <property type="project" value="UniProtKB-UniRule"/>
</dbReference>
<dbReference type="GO" id="GO:0005524">
    <property type="term" value="F:ATP binding"/>
    <property type="evidence" value="ECO:0007669"/>
    <property type="project" value="UniProtKB-UniRule"/>
</dbReference>
<dbReference type="GO" id="GO:0016887">
    <property type="term" value="F:ATP hydrolysis activity"/>
    <property type="evidence" value="ECO:0007669"/>
    <property type="project" value="InterPro"/>
</dbReference>
<dbReference type="GO" id="GO:0000400">
    <property type="term" value="F:four-way junction DNA binding"/>
    <property type="evidence" value="ECO:0007669"/>
    <property type="project" value="UniProtKB-UniRule"/>
</dbReference>
<dbReference type="GO" id="GO:0009378">
    <property type="term" value="F:four-way junction helicase activity"/>
    <property type="evidence" value="ECO:0007669"/>
    <property type="project" value="InterPro"/>
</dbReference>
<dbReference type="GO" id="GO:0006310">
    <property type="term" value="P:DNA recombination"/>
    <property type="evidence" value="ECO:0007669"/>
    <property type="project" value="UniProtKB-UniRule"/>
</dbReference>
<dbReference type="GO" id="GO:0006281">
    <property type="term" value="P:DNA repair"/>
    <property type="evidence" value="ECO:0007669"/>
    <property type="project" value="UniProtKB-UniRule"/>
</dbReference>
<dbReference type="CDD" id="cd00009">
    <property type="entry name" value="AAA"/>
    <property type="match status" value="1"/>
</dbReference>
<dbReference type="Gene3D" id="1.10.8.60">
    <property type="match status" value="1"/>
</dbReference>
<dbReference type="Gene3D" id="3.40.50.300">
    <property type="entry name" value="P-loop containing nucleotide triphosphate hydrolases"/>
    <property type="match status" value="1"/>
</dbReference>
<dbReference type="Gene3D" id="1.10.10.10">
    <property type="entry name" value="Winged helix-like DNA-binding domain superfamily/Winged helix DNA-binding domain"/>
    <property type="match status" value="1"/>
</dbReference>
<dbReference type="HAMAP" id="MF_00016">
    <property type="entry name" value="DNA_HJ_migration_RuvB"/>
    <property type="match status" value="1"/>
</dbReference>
<dbReference type="InterPro" id="IPR003593">
    <property type="entry name" value="AAA+_ATPase"/>
</dbReference>
<dbReference type="InterPro" id="IPR041445">
    <property type="entry name" value="AAA_lid_4"/>
</dbReference>
<dbReference type="InterPro" id="IPR004605">
    <property type="entry name" value="DNA_helicase_Holl-junc_RuvB"/>
</dbReference>
<dbReference type="InterPro" id="IPR027417">
    <property type="entry name" value="P-loop_NTPase"/>
</dbReference>
<dbReference type="InterPro" id="IPR008824">
    <property type="entry name" value="RuvB-like_N"/>
</dbReference>
<dbReference type="InterPro" id="IPR008823">
    <property type="entry name" value="RuvB_C"/>
</dbReference>
<dbReference type="InterPro" id="IPR036388">
    <property type="entry name" value="WH-like_DNA-bd_sf"/>
</dbReference>
<dbReference type="InterPro" id="IPR036390">
    <property type="entry name" value="WH_DNA-bd_sf"/>
</dbReference>
<dbReference type="NCBIfam" id="NF000868">
    <property type="entry name" value="PRK00080.1"/>
    <property type="match status" value="1"/>
</dbReference>
<dbReference type="NCBIfam" id="TIGR00635">
    <property type="entry name" value="ruvB"/>
    <property type="match status" value="1"/>
</dbReference>
<dbReference type="PANTHER" id="PTHR42848">
    <property type="match status" value="1"/>
</dbReference>
<dbReference type="PANTHER" id="PTHR42848:SF1">
    <property type="entry name" value="HOLLIDAY JUNCTION BRANCH MIGRATION COMPLEX SUBUNIT RUVB"/>
    <property type="match status" value="1"/>
</dbReference>
<dbReference type="Pfam" id="PF17864">
    <property type="entry name" value="AAA_lid_4"/>
    <property type="match status" value="1"/>
</dbReference>
<dbReference type="Pfam" id="PF05491">
    <property type="entry name" value="RuvB_C"/>
    <property type="match status" value="1"/>
</dbReference>
<dbReference type="Pfam" id="PF05496">
    <property type="entry name" value="RuvB_N"/>
    <property type="match status" value="1"/>
</dbReference>
<dbReference type="SMART" id="SM00382">
    <property type="entry name" value="AAA"/>
    <property type="match status" value="1"/>
</dbReference>
<dbReference type="SUPFAM" id="SSF52540">
    <property type="entry name" value="P-loop containing nucleoside triphosphate hydrolases"/>
    <property type="match status" value="1"/>
</dbReference>
<dbReference type="SUPFAM" id="SSF46785">
    <property type="entry name" value="Winged helix' DNA-binding domain"/>
    <property type="match status" value="1"/>
</dbReference>
<reference key="1">
    <citation type="journal article" date="2006" name="Proc. Natl. Acad. Sci. U.S.A.">
        <title>Comparative genomics of the lactic acid bacteria.</title>
        <authorList>
            <person name="Makarova K.S."/>
            <person name="Slesarev A."/>
            <person name="Wolf Y.I."/>
            <person name="Sorokin A."/>
            <person name="Mirkin B."/>
            <person name="Koonin E.V."/>
            <person name="Pavlov A."/>
            <person name="Pavlova N."/>
            <person name="Karamychev V."/>
            <person name="Polouchine N."/>
            <person name="Shakhova V."/>
            <person name="Grigoriev I."/>
            <person name="Lou Y."/>
            <person name="Rohksar D."/>
            <person name="Lucas S."/>
            <person name="Huang K."/>
            <person name="Goodstein D.M."/>
            <person name="Hawkins T."/>
            <person name="Plengvidhya V."/>
            <person name="Welker D."/>
            <person name="Hughes J."/>
            <person name="Goh Y."/>
            <person name="Benson A."/>
            <person name="Baldwin K."/>
            <person name="Lee J.-H."/>
            <person name="Diaz-Muniz I."/>
            <person name="Dosti B."/>
            <person name="Smeianov V."/>
            <person name="Wechter W."/>
            <person name="Barabote R."/>
            <person name="Lorca G."/>
            <person name="Altermann E."/>
            <person name="Barrangou R."/>
            <person name="Ganesan B."/>
            <person name="Xie Y."/>
            <person name="Rawsthorne H."/>
            <person name="Tamir D."/>
            <person name="Parker C."/>
            <person name="Breidt F."/>
            <person name="Broadbent J.R."/>
            <person name="Hutkins R."/>
            <person name="O'Sullivan D."/>
            <person name="Steele J."/>
            <person name="Unlu G."/>
            <person name="Saier M.H. Jr."/>
            <person name="Klaenhammer T."/>
            <person name="Richardson P."/>
            <person name="Kozyavkin S."/>
            <person name="Weimer B.C."/>
            <person name="Mills D.A."/>
        </authorList>
    </citation>
    <scope>NUCLEOTIDE SEQUENCE [LARGE SCALE GENOMIC DNA]</scope>
    <source>
        <strain>ATCC BAA-491 / LMD-9</strain>
    </source>
</reference>
<evidence type="ECO:0000255" key="1">
    <source>
        <dbReference type="HAMAP-Rule" id="MF_00016"/>
    </source>
</evidence>
<evidence type="ECO:0000305" key="2"/>
<organism>
    <name type="scientific">Streptococcus thermophilus (strain ATCC BAA-491 / LMD-9)</name>
    <dbReference type="NCBI Taxonomy" id="322159"/>
    <lineage>
        <taxon>Bacteria</taxon>
        <taxon>Bacillati</taxon>
        <taxon>Bacillota</taxon>
        <taxon>Bacilli</taxon>
        <taxon>Lactobacillales</taxon>
        <taxon>Streptococcaceae</taxon>
        <taxon>Streptococcus</taxon>
    </lineage>
</organism>
<protein>
    <recommendedName>
        <fullName evidence="1">Holliday junction branch migration complex subunit RuvB</fullName>
        <ecNumber evidence="1">3.6.4.-</ecNumber>
    </recommendedName>
</protein>
<feature type="chain" id="PRO_0000322847" description="Holliday junction branch migration complex subunit RuvB">
    <location>
        <begin position="1"/>
        <end position="333"/>
    </location>
</feature>
<feature type="region of interest" description="Large ATPase domain (RuvB-L)" evidence="1">
    <location>
        <begin position="1"/>
        <end position="181"/>
    </location>
</feature>
<feature type="region of interest" description="Small ATPAse domain (RuvB-S)" evidence="1">
    <location>
        <begin position="182"/>
        <end position="252"/>
    </location>
</feature>
<feature type="region of interest" description="Head domain (RuvB-H)" evidence="1">
    <location>
        <begin position="255"/>
        <end position="333"/>
    </location>
</feature>
<feature type="binding site" evidence="1">
    <location>
        <position position="20"/>
    </location>
    <ligand>
        <name>ATP</name>
        <dbReference type="ChEBI" id="CHEBI:30616"/>
    </ligand>
</feature>
<feature type="binding site" evidence="1">
    <location>
        <position position="21"/>
    </location>
    <ligand>
        <name>ATP</name>
        <dbReference type="ChEBI" id="CHEBI:30616"/>
    </ligand>
</feature>
<feature type="binding site" evidence="1">
    <location>
        <position position="62"/>
    </location>
    <ligand>
        <name>ATP</name>
        <dbReference type="ChEBI" id="CHEBI:30616"/>
    </ligand>
</feature>
<feature type="binding site" evidence="1">
    <location>
        <position position="65"/>
    </location>
    <ligand>
        <name>ATP</name>
        <dbReference type="ChEBI" id="CHEBI:30616"/>
    </ligand>
</feature>
<feature type="binding site" evidence="1">
    <location>
        <position position="66"/>
    </location>
    <ligand>
        <name>ATP</name>
        <dbReference type="ChEBI" id="CHEBI:30616"/>
    </ligand>
</feature>
<feature type="binding site" evidence="1">
    <location>
        <position position="66"/>
    </location>
    <ligand>
        <name>Mg(2+)</name>
        <dbReference type="ChEBI" id="CHEBI:18420"/>
    </ligand>
</feature>
<feature type="binding site" evidence="1">
    <location>
        <position position="67"/>
    </location>
    <ligand>
        <name>ATP</name>
        <dbReference type="ChEBI" id="CHEBI:30616"/>
    </ligand>
</feature>
<feature type="binding site" evidence="1">
    <location>
        <begin position="128"/>
        <end position="130"/>
    </location>
    <ligand>
        <name>ATP</name>
        <dbReference type="ChEBI" id="CHEBI:30616"/>
    </ligand>
</feature>
<feature type="binding site" evidence="1">
    <location>
        <position position="171"/>
    </location>
    <ligand>
        <name>ATP</name>
        <dbReference type="ChEBI" id="CHEBI:30616"/>
    </ligand>
</feature>
<feature type="binding site" evidence="1">
    <location>
        <position position="181"/>
    </location>
    <ligand>
        <name>ATP</name>
        <dbReference type="ChEBI" id="CHEBI:30616"/>
    </ligand>
</feature>
<feature type="binding site" evidence="1">
    <location>
        <position position="218"/>
    </location>
    <ligand>
        <name>ATP</name>
        <dbReference type="ChEBI" id="CHEBI:30616"/>
    </ligand>
</feature>
<feature type="binding site" evidence="1">
    <location>
        <position position="291"/>
    </location>
    <ligand>
        <name>DNA</name>
        <dbReference type="ChEBI" id="CHEBI:16991"/>
    </ligand>
</feature>
<feature type="binding site" evidence="1">
    <location>
        <position position="310"/>
    </location>
    <ligand>
        <name>DNA</name>
        <dbReference type="ChEBI" id="CHEBI:16991"/>
    </ligand>
</feature>
<feature type="binding site" evidence="1">
    <location>
        <position position="312"/>
    </location>
    <ligand>
        <name>DNA</name>
        <dbReference type="ChEBI" id="CHEBI:16991"/>
    </ligand>
</feature>
<feature type="binding site" evidence="1">
    <location>
        <position position="315"/>
    </location>
    <ligand>
        <name>DNA</name>
        <dbReference type="ChEBI" id="CHEBI:16991"/>
    </ligand>
</feature>
<gene>
    <name evidence="1" type="primary">ruvB</name>
    <name type="ordered locus">STER_1909</name>
</gene>
<keyword id="KW-0067">ATP-binding</keyword>
<keyword id="KW-0963">Cytoplasm</keyword>
<keyword id="KW-0227">DNA damage</keyword>
<keyword id="KW-0233">DNA recombination</keyword>
<keyword id="KW-0234">DNA repair</keyword>
<keyword id="KW-0238">DNA-binding</keyword>
<keyword id="KW-0378">Hydrolase</keyword>
<keyword id="KW-0547">Nucleotide-binding</keyword>
<comment type="function">
    <text evidence="1">The RuvA-RuvB-RuvC complex processes Holliday junction (HJ) DNA during genetic recombination and DNA repair, while the RuvA-RuvB complex plays an important role in the rescue of blocked DNA replication forks via replication fork reversal (RFR). RuvA specifically binds to HJ cruciform DNA, conferring on it an open structure. The RuvB hexamer acts as an ATP-dependent pump, pulling dsDNA into and through the RuvAB complex. RuvB forms 2 homohexamers on either side of HJ DNA bound by 1 or 2 RuvA tetramers; 4 subunits per hexamer contact DNA at a time. Coordinated motions by a converter formed by DNA-disengaged RuvB subunits stimulates ATP hydrolysis and nucleotide exchange. Immobilization of the converter enables RuvB to convert the ATP-contained energy into a lever motion, pulling 2 nucleotides of DNA out of the RuvA tetramer per ATP hydrolyzed, thus driving DNA branch migration. The RuvB motors rotate together with the DNA substrate, which together with the progressing nucleotide cycle form the mechanistic basis for DNA recombination by continuous HJ branch migration. Branch migration allows RuvC to scan DNA until it finds its consensus sequence, where it cleaves and resolves cruciform DNA.</text>
</comment>
<comment type="catalytic activity">
    <reaction evidence="1">
        <text>ATP + H2O = ADP + phosphate + H(+)</text>
        <dbReference type="Rhea" id="RHEA:13065"/>
        <dbReference type="ChEBI" id="CHEBI:15377"/>
        <dbReference type="ChEBI" id="CHEBI:15378"/>
        <dbReference type="ChEBI" id="CHEBI:30616"/>
        <dbReference type="ChEBI" id="CHEBI:43474"/>
        <dbReference type="ChEBI" id="CHEBI:456216"/>
    </reaction>
</comment>
<comment type="subunit">
    <text evidence="1">Homohexamer. Forms an RuvA(8)-RuvB(12)-Holliday junction (HJ) complex. HJ DNA is sandwiched between 2 RuvA tetramers; dsDNA enters through RuvA and exits via RuvB. An RuvB hexamer assembles on each DNA strand where it exits the tetramer. Each RuvB hexamer is contacted by two RuvA subunits (via domain III) on 2 adjacent RuvB subunits; this complex drives branch migration. In the full resolvosome a probable DNA-RuvA(4)-RuvB(12)-RuvC(2) complex forms which resolves the HJ.</text>
</comment>
<comment type="subcellular location">
    <subcellularLocation>
        <location evidence="1">Cytoplasm</location>
    </subcellularLocation>
</comment>
<comment type="domain">
    <text evidence="1">Has 3 domains, the large (RuvB-L) and small ATPase (RuvB-S) domains and the C-terminal head (RuvB-H) domain. The head domain binds DNA, while the ATPase domains jointly bind ATP, ADP or are empty depending on the state of the subunit in the translocation cycle. During a single DNA translocation step the structure of each domain remains the same, but their relative positions change.</text>
</comment>
<comment type="similarity">
    <text evidence="1">Belongs to the RuvB family.</text>
</comment>
<comment type="sequence caution" evidence="2">
    <conflict type="erroneous initiation">
        <sequence resource="EMBL-CDS" id="ABJ67023"/>
    </conflict>
</comment>
<sequence length="333" mass="37541">MARILDNDLLGDEEYVERTLRPQYFKEYIGQDKVKDQLKIFIEAAKLRDEALDHTLLFGPPGLGKTTMAFVIANEMGVNLKQTSGPAIEKAGDLVAILNDLEPGDILFIDEIHRMPMAVEEVLYSAMEDYYIDIMIGAGETSRSVHLDLPPFTLVGATTRAGMLSNPLRARFGINGHMEYYELPDLTEIVERTSEIFEMTITPEAALELARRSRGTPRIANRLLKRVRDYAQIMGDGVIDDKIADQALTMLDVDHEGLDYVDQKILRTMIEMYGGGPVGLGTLSVNIAEERETVEDMYEPYLIQKGFIMRTRTGRVATAKAYEHMGYDYTRDN</sequence>